<accession>L7NCQ4</accession>
<dbReference type="EMBL" id="HM543168">
    <property type="protein sequence ID" value="AEJ88233.1"/>
    <property type="molecule type" value="Genomic_DNA"/>
</dbReference>
<dbReference type="SMR" id="L7NCQ4"/>
<dbReference type="VEuPathDB" id="FungiDB:DVH05_001772"/>
<dbReference type="OrthoDB" id="147163at2759"/>
<dbReference type="GO" id="GO:0005576">
    <property type="term" value="C:extracellular region"/>
    <property type="evidence" value="ECO:0007669"/>
    <property type="project" value="UniProtKB-SubCell"/>
</dbReference>
<dbReference type="InterPro" id="IPR008701">
    <property type="entry name" value="NPP1"/>
</dbReference>
<dbReference type="PANTHER" id="PTHR33657">
    <property type="entry name" value="DOMAIN PROTEIN, PUTATIVE (AFU_ORTHOLOGUE AFUA_5G00600)-RELATED"/>
    <property type="match status" value="1"/>
</dbReference>
<dbReference type="PANTHER" id="PTHR33657:SF8">
    <property type="entry name" value="DOMAIN PROTEIN, PUTATIVE (AFU_ORTHOLOGUE AFUA_5G00600)-RELATED"/>
    <property type="match status" value="1"/>
</dbReference>
<dbReference type="Pfam" id="PF05630">
    <property type="entry name" value="NPP1"/>
    <property type="match status" value="1"/>
</dbReference>
<dbReference type="PIRSF" id="PIRSF029958">
    <property type="entry name" value="Necrosis-inducing_protein"/>
    <property type="match status" value="1"/>
</dbReference>
<gene>
    <name evidence="5" type="primary">NLP2</name>
    <name evidence="4" type="synonym">NPP2</name>
</gene>
<feature type="signal peptide" evidence="2">
    <location>
        <begin position="1"/>
        <end position="19"/>
    </location>
</feature>
<feature type="chain" id="PRO_5003982505" description="NLP effector protein 2">
    <location>
        <begin position="20"/>
        <end position="246"/>
    </location>
</feature>
<feature type="short sequence motif" description="Conserved undecapeptide motif I" evidence="1">
    <location>
        <begin position="113"/>
        <end position="123"/>
    </location>
</feature>
<feature type="short sequence motif" description="Hepta-peptide GHRHDWE motif II" evidence="8">
    <location>
        <begin position="130"/>
        <end position="136"/>
    </location>
</feature>
<proteinExistence type="evidence at transcript level"/>
<comment type="function">
    <text evidence="3">Secreted effector that contributes strongly to virulence during infection by P.capsici. Causes large necrotic areas in both host C.annuum and non-host N.benthamiana.</text>
</comment>
<comment type="subcellular location">
    <subcellularLocation>
        <location evidence="7">Secreted</location>
    </subcellularLocation>
</comment>
<comment type="induction">
    <text evidence="3">Expression reached the highest levels at 3 days after inoculation of pepper leaves, followed by a gradual decline.</text>
</comment>
<comment type="domain">
    <text evidence="1">Key residues/motif important for the effector activities are degenerated in most NLPs, including the nlp24 peptide consisting of the conserved region I (11-aa immunogenic part) and conserved region II (the heptapeptide GHRHDWE motif) that is important for phytotoxic activity.</text>
</comment>
<comment type="similarity">
    <text evidence="6">Belongs to the Necrosis inducing protein (NPP1) family.</text>
</comment>
<reference key="1">
    <citation type="journal article" date="2011" name="Genet. Mol. Res.">
        <title>Identification of 18 genes encoding necrosis-inducing proteins from the plant pathogen Phytophthora capsici (Pythiaceae: Oomycetes).</title>
        <authorList>
            <person name="Feng B.Z."/>
            <person name="Li P.Q."/>
            <person name="Fu L."/>
            <person name="Sun B.B."/>
            <person name="Zhang X.G."/>
        </authorList>
    </citation>
    <scope>NUCLEOTIDE SEQUENCE [GENOMIC DNA]</scope>
    <scope>DOMAIN</scope>
</reference>
<reference key="2">
    <citation type="journal article" date="2014" name="BMC Plant Biol.">
        <title>Characterization of necrosis-inducing NLP proteins in Phytophthora capsici.</title>
        <authorList>
            <person name="Feng B.Z."/>
            <person name="Zhu X.P."/>
            <person name="Fu L."/>
            <person name="Lv R.F."/>
            <person name="Storey D."/>
            <person name="Tooley P."/>
            <person name="Zhang X.G."/>
        </authorList>
    </citation>
    <scope>INDUCTION</scope>
    <scope>FUNCTION</scope>
</reference>
<evidence type="ECO:0000250" key="1">
    <source>
        <dbReference type="UniProtKB" id="L7NCR0"/>
    </source>
</evidence>
<evidence type="ECO:0000255" key="2"/>
<evidence type="ECO:0000269" key="3">
    <source>
    </source>
</evidence>
<evidence type="ECO:0000303" key="4">
    <source>
    </source>
</evidence>
<evidence type="ECO:0000303" key="5">
    <source>
    </source>
</evidence>
<evidence type="ECO:0000305" key="6"/>
<evidence type="ECO:0000305" key="7">
    <source>
    </source>
</evidence>
<evidence type="ECO:0000305" key="8">
    <source>
    </source>
</evidence>
<name>NLP2_PHYCP</name>
<organism>
    <name type="scientific">Phytophthora capsici</name>
    <dbReference type="NCBI Taxonomy" id="4784"/>
    <lineage>
        <taxon>Eukaryota</taxon>
        <taxon>Sar</taxon>
        <taxon>Stramenopiles</taxon>
        <taxon>Oomycota</taxon>
        <taxon>Peronosporales</taxon>
        <taxon>Peronosporaceae</taxon>
        <taxon>Phytophthora</taxon>
    </lineage>
</organism>
<protein>
    <recommendedName>
        <fullName evidence="5">NLP effector protein 2</fullName>
    </recommendedName>
    <alternativeName>
        <fullName evidence="4">Necrosis-inducing protein 2</fullName>
    </alternativeName>
    <alternativeName>
        <fullName evidence="4">Nep1-like protein 2</fullName>
    </alternativeName>
</protein>
<keyword id="KW-0964">Secreted</keyword>
<keyword id="KW-0732">Signal</keyword>
<keyword id="KW-0843">Virulence</keyword>
<sequence>MKFVVFLCAIAAVVATIQGQEQQQQQQLPATIDHDQVKPFPQPQPVTISERAAMKFKPQLHVVDGCHPYPAVNDAGETGGGLKTTGSPTAGCKGSGWGSQVYGRSTWHRDVWAIMYSWYFPKDSPSTGLGHRHDWEHVIVWISNPDVPNPTILAVTPSAHSGYSKYAPPSADTVDGTSIKVRYESTYPMNHATDVTTEAGAFQDLIMWDQMTDAARNALNTVSFGDANVPMNDGNFVPKLDKAWPF</sequence>